<protein>
    <recommendedName>
        <fullName evidence="4">Alpha-1,3-mannosyl-glycoprotein 4-beta-N-acetylglucosaminyltransferase A</fullName>
        <ecNumber evidence="1">2.4.1.145</ecNumber>
    </recommendedName>
    <alternativeName>
        <fullName>N-glycosyl-oligosaccharide-glycoprotein N-acetylglucosaminyltransferase IVa</fullName>
        <shortName>GlcNAc-T IVa</shortName>
        <shortName>GnT-IVa</shortName>
        <shortName>N-acetylglucosaminyltransferase IVa</shortName>
    </alternativeName>
    <alternativeName>
        <fullName>UDP-N-acetylglucosamine: alpha-1,3-D-mannoside beta-1,4-N-acetylglucosaminyltransferase IVa</fullName>
    </alternativeName>
    <component>
        <recommendedName>
            <fullName>Alpha-1,3-mannosyl-glycoprotein 4-beta-N-acetylglucosaminyltransferase A soluble form</fullName>
        </recommendedName>
    </component>
</protein>
<sequence length="535" mass="61566">MRLRNGTVATVLVFITTFLSLSWYTAWQNGKEKLIAYQREFHALKERLRIAEHRTLQRSSELNAILEQFRRAVAETNGSKNALNNFSDETLKLLKELTSKKSLQVPNIYYHLPHLLKNEGSLQPSVQVGLGRTGVSIVMGIPTVKRKVKSYLTETLHSLIDKLSPEEKLDCVMVVFIGETDLDYVNNVVASLEKEFSTEINSGLVEVIAPPATYYPDLTNLKETFGDSKERVRWRTKQNLDYCFLMMYAQKKGVYYIQLEDDIVVKQNYFSTIKNFALQLASEDWMILEFSQLGFIGKMFQSPDITLIVEFIFMFYKEKPIDWLLDHILWVKVCNPEKDAKHCDRQKSNLRIRFRPSLFQHVGLHSSLAGKIQKLTDKDFLKPLLHKIHVNPPAEVSTSLKVYQGHTLEKTYVGEDFFWAVTPVAGDYILFKFDKPVNVERYLFHSGNPEHPGDILLNTTVEVLPFQNEELVLSKETKDKRLEDGYFRIGKFENGVAEGTVDPSLNPISSFRLSVIQNSAVWAILNEIHIKKMTN</sequence>
<feature type="chain" id="PRO_0000288591" description="Alpha-1,3-mannosyl-glycoprotein 4-beta-N-acetylglucosaminyltransferase A">
    <location>
        <begin position="1"/>
        <end position="535"/>
    </location>
</feature>
<feature type="chain" id="PRO_0000455172" description="Alpha-1,3-mannosyl-glycoprotein 4-beta-N-acetylglucosaminyltransferase A soluble form" evidence="1">
    <location>
        <begin position="93"/>
        <end position="535"/>
    </location>
</feature>
<feature type="topological domain" description="Cytoplasmic" evidence="5">
    <location>
        <begin position="1"/>
        <end position="6"/>
    </location>
</feature>
<feature type="transmembrane region" description="Helical; Signal-anchor for type II membrane protein" evidence="5">
    <location>
        <begin position="7"/>
        <end position="27"/>
    </location>
</feature>
<feature type="topological domain" description="Lumenal" evidence="5">
    <location>
        <begin position="28"/>
        <end position="535"/>
    </location>
</feature>
<feature type="coiled-coil region" evidence="5">
    <location>
        <begin position="28"/>
        <end position="54"/>
    </location>
</feature>
<feature type="glycosylation site" description="N-linked (GlcNAc...) asparagine" evidence="5">
    <location>
        <position position="77"/>
    </location>
</feature>
<feature type="glycosylation site" description="N-linked (GlcNAc...) asparagine" evidence="5">
    <location>
        <position position="85"/>
    </location>
</feature>
<feature type="glycosylation site" description="N-linked (GlcNAc...) asparagine" evidence="5">
    <location>
        <position position="458"/>
    </location>
</feature>
<comment type="function">
    <text evidence="1 2">Glycosyltransferase that catalyze the transfer of GlcNAc from UDP-GlcNAc to the GlcNAcbeta1-2Manalpha1-3 arm of the core structure of N-linked glycans through a beta1-4 linkage and participates in the production of tri- and tetra-antennary N-linked sugar chains (By similarity). Involved in glucose transport by mediating SLC2A2/GLUT2 glycosylation, thereby controlling cell-surface expression of SLC2A2 in pancreatic beta cells (By similarity).</text>
</comment>
<comment type="catalytic activity">
    <reaction evidence="4">
        <text>N(4)-{beta-D-GlcNAc-(1-&gt;2)-alpha-D-Man-(1-&gt;3)-[beta-D-GlcNAc-(1-&gt;2)-alpha-D-Man-(1-&gt;6)]-beta-D-Man-(1-&gt;4)-beta-D-GlcNAc-(1-&gt;4)-beta-D-GlcNAc}-L-asparaginyl-[protein] + UDP-N-acetyl-alpha-D-glucosamine = N(4)-{beta-D-GlcNAc-(1-&gt;2)-[beta-D-GlcNAc-(1-&gt;4)]-alpha-D-Man-(1-&gt;3)-[beta-D-GlcNAc-(1-&gt;2)-alpha-D-Man-(1-&gt;6)]-beta-D-Man-(1-&gt;4)-beta-D-GlcNAc-(1-&gt;4)-beta-D-GlcNAc}-L-asparaginyl-[protein] + UDP + H(+)</text>
        <dbReference type="Rhea" id="RHEA:16057"/>
        <dbReference type="Rhea" id="RHEA-COMP:13526"/>
        <dbReference type="Rhea" id="RHEA-COMP:14374"/>
        <dbReference type="ChEBI" id="CHEBI:15378"/>
        <dbReference type="ChEBI" id="CHEBI:57705"/>
        <dbReference type="ChEBI" id="CHEBI:58223"/>
        <dbReference type="ChEBI" id="CHEBI:60651"/>
        <dbReference type="ChEBI" id="CHEBI:139507"/>
        <dbReference type="EC" id="2.4.1.145"/>
    </reaction>
    <physiologicalReaction direction="left-to-right" evidence="4">
        <dbReference type="Rhea" id="RHEA:16058"/>
    </physiologicalReaction>
</comment>
<comment type="catalytic activity">
    <reaction evidence="4">
        <text>an N(4)-{beta-D-GlcNAc-(1-&gt;2)-alpha-D-Man-(1-&gt;3)-[alpha-D-Man-(1-&gt;6)]-beta-D-Man-(1-&gt;4)-beta-D-GlcNAc-(1-&gt;4)-beta-D-GlcNAc}-L-asparaginyl-[protein] + UDP-N-acetyl-alpha-D-glucosamine = an N(4)-{beta-D-GlcNAc-(1-&gt;2)-[beta-D-GlcNAc-(1-&gt;4)]-alpha-D-Man-(1-&gt;3)-[alpha-D-Man-(1-&gt;6)]-beta-D-Man-(1-&gt;4)-beta-D-GlcNAc-(1-&gt;4)-beta-D-GlcNAc}-L-asparaginyl-[protein] + UDP + H(+)</text>
        <dbReference type="Rhea" id="RHEA:69615"/>
        <dbReference type="Rhea" id="RHEA-COMP:14369"/>
        <dbReference type="Rhea" id="RHEA-COMP:17732"/>
        <dbReference type="ChEBI" id="CHEBI:15378"/>
        <dbReference type="ChEBI" id="CHEBI:57705"/>
        <dbReference type="ChEBI" id="CHEBI:58223"/>
        <dbReference type="ChEBI" id="CHEBI:60615"/>
        <dbReference type="ChEBI" id="CHEBI:187873"/>
    </reaction>
    <physiologicalReaction direction="left-to-right" evidence="4">
        <dbReference type="Rhea" id="RHEA:69616"/>
    </physiologicalReaction>
</comment>
<comment type="catalytic activity">
    <reaction evidence="4">
        <text>an N(4)-{beta-D-GlcNAc-(1-&gt;2)-alpha-D-Man-(1-&gt;3)-[beta-D-GlcNAc-(1-&gt;2)-[beta-D-GlcNAc-(1-&gt;6)]-alpha-D-Man-(1-&gt;6)]-beta-D-Man-(1-&gt;4)-beta-D-GlcNAc-(1-&gt;4)-beta-D-GlcNAc}-L-asparaginyl-[protein] + UDP-N-acetyl-alpha-D-glucosamine = an N(4)-{beta-D-GlcNAc-(1-&gt;2)-[beta-D-GlcNAc-(1-&gt;4)]-alpha-D-Man-(1-&gt;3)-[beta-D-GlcNAc-(1-&gt;2)-[beta-D-GlcNAc-(1-&gt;6)]-alpha-D-Man-(1-&gt;6)]-beta-D-Man-(1-&gt;4)-beta-D-GlcNAc-(1-&gt;4)-beta-D-GlcNAc}-L-asparaginyl-[protein] + UDP + H(+)</text>
        <dbReference type="Rhea" id="RHEA:69619"/>
        <dbReference type="Rhea" id="RHEA-COMP:17733"/>
        <dbReference type="Rhea" id="RHEA-COMP:17734"/>
        <dbReference type="ChEBI" id="CHEBI:15378"/>
        <dbReference type="ChEBI" id="CHEBI:57705"/>
        <dbReference type="ChEBI" id="CHEBI:58223"/>
        <dbReference type="ChEBI" id="CHEBI:187874"/>
        <dbReference type="ChEBI" id="CHEBI:187875"/>
    </reaction>
    <physiologicalReaction direction="left-to-right" evidence="4">
        <dbReference type="Rhea" id="RHEA:69620"/>
    </physiologicalReaction>
</comment>
<comment type="catalytic activity">
    <reaction evidence="4">
        <text>an N(4)-{beta-D-GlcNAc-(1-&gt;2)-alpha-D-Man-(1-&gt;3)-[beta-D-GlcNAc-(1-&gt;2)-alpha-D-Man-(1-&gt;6)]-beta-D-Man-(1-&gt;4)-beta-D-GlcNAc-(1-&gt;4)-[alpha-L-Fuc-(1-&gt;6)]-beta-D-GlcNAc}-L-asparaginyl-[protein] + UDP-N-acetyl-alpha-D-glucosamine = N(4)-{beta-D-GlcNAc-(1-&gt;2)-[beta-D-GlcNAc-(1-&gt;4)]-alpha-D-Man-(1-&gt;3)-[beta-D-GlcNAc-(1-&gt;2)-alpha-D-Man-(1-&gt;6)]-beta-D-Man-(1-&gt;4)-beta-D-GlcNAc-(1-&gt;4)-[alpha-L-Fuc-(1-&gt;6)]-beta-D-GlcNAc}-asparaginyl-[protein] + UDP + H(+)</text>
        <dbReference type="Rhea" id="RHEA:69623"/>
        <dbReference type="Rhea" id="RHEA-COMP:13532"/>
        <dbReference type="Rhea" id="RHEA-COMP:18198"/>
        <dbReference type="ChEBI" id="CHEBI:15378"/>
        <dbReference type="ChEBI" id="CHEBI:57705"/>
        <dbReference type="ChEBI" id="CHEBI:58223"/>
        <dbReference type="ChEBI" id="CHEBI:137207"/>
        <dbReference type="ChEBI" id="CHEBI:187877"/>
    </reaction>
    <physiologicalReaction direction="left-to-right" evidence="4">
        <dbReference type="Rhea" id="RHEA:69624"/>
    </physiologicalReaction>
</comment>
<comment type="catalytic activity">
    <reaction evidence="4">
        <text>an N(4)-{beta-D-GlcNAc-(1-&gt;2)-alpha-D-Man-(1-&gt;3)-[beta-D-Gal-(1-&gt;4)-beta-D-GlcNAc-(1-&gt;2)-alpha-D-Man-(1-&gt;6)]-beta-D-Man-(1-&gt;4)-beta-D-GlcNAc-(1-&gt;4)-beta-D-GlcNAc}-L-asparaginyl-[protein] + UDP-N-acetyl-alpha-D-glucosamine = an N(4)-{beta-D-GlcNAc-(1-&gt;2)-[beta-D-GlcNAc-(1-&gt;4)]-alpha-D-Man-(1-&gt;3)-[beta-D-Gal-(1-&gt;4)-beta-D-GlcNAc-(1-&gt;2)-alpha-D-Man-(1-&gt;6)]-beta-D-Man-(1-&gt;4)-beta-D-GlcNAc-(1-&gt;4)-beta-D-GlcNAc}-L-asparaginyl-[protein] + UDP + H(+)</text>
        <dbReference type="Rhea" id="RHEA:69627"/>
        <dbReference type="Rhea" id="RHEA-COMP:17737"/>
        <dbReference type="Rhea" id="RHEA-COMP:17738"/>
        <dbReference type="ChEBI" id="CHEBI:15378"/>
        <dbReference type="ChEBI" id="CHEBI:57705"/>
        <dbReference type="ChEBI" id="CHEBI:58223"/>
        <dbReference type="ChEBI" id="CHEBI:187878"/>
        <dbReference type="ChEBI" id="CHEBI:187879"/>
    </reaction>
    <physiologicalReaction direction="left-to-right" evidence="4">
        <dbReference type="Rhea" id="RHEA:69628"/>
    </physiologicalReaction>
</comment>
<comment type="catalytic activity">
    <reaction evidence="4">
        <text>N(4)-{beta-D-GlcNAc-(1-&gt;2)-alpha-D-Man-(1-&gt;3)-[alpha-D-Man-(1-&gt;3)-{alpha-D-Man-(1-&gt;6)}-alpha-D-Man-(1-&gt;6)]-beta-D-Man-(1-&gt;4)-beta-D-GlcNAc-(1-&gt;4)-beta-D-GlcNAc}-asparaginyl-[protein] + UDP-N-acetyl-alpha-D-glucosamine = N(4)-{beta-D-GlcNAc-(1-&gt;2)-[beta-D-GlcNAc-(1-&gt;4)]-alpha-D-Man-(1-&gt;3)-[alpha-D-Man-(1-&gt;3)-{alpha-D-Man-(1-&gt;6)}-alpha-D-Man-(1-&gt;6)]-beta-D-Man-(1-&gt;4)-beta-D-GlcNAc-(1-&gt;4)-beta-D-GlcNAc}-asparaginyl-[protein] + UDP + H(+)</text>
        <dbReference type="Rhea" id="RHEA:69631"/>
        <dbReference type="Rhea" id="RHEA-COMP:17739"/>
        <dbReference type="Rhea" id="RHEA-COMP:17740"/>
        <dbReference type="ChEBI" id="CHEBI:15378"/>
        <dbReference type="ChEBI" id="CHEBI:57705"/>
        <dbReference type="ChEBI" id="CHEBI:58223"/>
        <dbReference type="ChEBI" id="CHEBI:187880"/>
        <dbReference type="ChEBI" id="CHEBI:187881"/>
    </reaction>
    <physiologicalReaction direction="left-to-right" evidence="4">
        <dbReference type="Rhea" id="RHEA:69632"/>
    </physiologicalReaction>
</comment>
<comment type="catalytic activity">
    <reaction evidence="4">
        <text>N(4)-{beta-D-GlcNAc-(1-&gt;2)-alpha-D-Man-(1-&gt;3)-beta-D-Man-(1-&gt;4)-beta-D-GlcNAc-(1-&gt;4)-beta-D-GlcNAc}-asparaginyl-[protein] + UDP-N-acetyl-alpha-D-glucosamine = N(4)-{beta-D-GlcNAc-(1-&gt;2)-[beta-D-GlcNAc-(1-&gt;4)]-alpha-D-Man-(1-&gt;3)-beta-D-Man-(1-&gt;4)-beta-D-GlcNAc-(1-&gt;4)-beta-D-GlcNAc}-asparaginyl-[protein] + UDP + H(+)</text>
        <dbReference type="Rhea" id="RHEA:69635"/>
        <dbReference type="Rhea" id="RHEA-COMP:17741"/>
        <dbReference type="Rhea" id="RHEA-COMP:17742"/>
        <dbReference type="ChEBI" id="CHEBI:15378"/>
        <dbReference type="ChEBI" id="CHEBI:57705"/>
        <dbReference type="ChEBI" id="CHEBI:58223"/>
        <dbReference type="ChEBI" id="CHEBI:187882"/>
        <dbReference type="ChEBI" id="CHEBI:187883"/>
    </reaction>
    <physiologicalReaction direction="left-to-right" evidence="4">
        <dbReference type="Rhea" id="RHEA:69636"/>
    </physiologicalReaction>
</comment>
<comment type="cofactor">
    <cofactor evidence="1">
        <name>a divalent metal cation</name>
        <dbReference type="ChEBI" id="CHEBI:60240"/>
    </cofactor>
</comment>
<comment type="activity regulation">
    <text evidence="1">Inhibited by UDP.</text>
</comment>
<comment type="pathway">
    <text evidence="1">Protein modification; protein glycosylation.</text>
</comment>
<comment type="subcellular location">
    <subcellularLocation>
        <location evidence="3">Golgi apparatus membrane</location>
        <topology evidence="3">Single-pass type II membrane protein</topology>
    </subcellularLocation>
</comment>
<comment type="subcellular location">
    <molecule>Alpha-1,3-mannosyl-glycoprotein 4-beta-N-acetylglucosaminyltransferase A soluble form</molecule>
    <subcellularLocation>
        <location evidence="1">Secreted</location>
    </subcellularLocation>
</comment>
<comment type="PTM">
    <text evidence="1">N-glycosylated.</text>
</comment>
<comment type="similarity">
    <text evidence="6">Belongs to the glycosyltransferase 54 family.</text>
</comment>
<accession>Q5F407</accession>
<proteinExistence type="evidence at transcript level"/>
<gene>
    <name evidence="4" type="primary">MGAT4A</name>
    <name type="ORF">RCJMB04_3o8</name>
</gene>
<reference key="1">
    <citation type="journal article" date="2005" name="Genome Biol.">
        <title>Full-length cDNAs from chicken bursal lymphocytes to facilitate gene function analysis.</title>
        <authorList>
            <person name="Caldwell R.B."/>
            <person name="Kierzek A.M."/>
            <person name="Arakawa H."/>
            <person name="Bezzubov Y."/>
            <person name="Zaim J."/>
            <person name="Fiedler P."/>
            <person name="Kutter S."/>
            <person name="Blagodatski A."/>
            <person name="Kostovska D."/>
            <person name="Koter M."/>
            <person name="Plachy J."/>
            <person name="Carninci P."/>
            <person name="Hayashizaki Y."/>
            <person name="Buerstedde J.-M."/>
        </authorList>
    </citation>
    <scope>NUCLEOTIDE SEQUENCE [LARGE SCALE MRNA]</scope>
    <source>
        <strain>CB</strain>
        <tissue>Bursa of Fabricius</tissue>
    </source>
</reference>
<dbReference type="EC" id="2.4.1.145" evidence="1"/>
<dbReference type="EMBL" id="AJ851493">
    <property type="protein sequence ID" value="CAH65127.1"/>
    <property type="molecule type" value="mRNA"/>
</dbReference>
<dbReference type="RefSeq" id="NP_001012842.1">
    <property type="nucleotide sequence ID" value="NM_001012824.1"/>
</dbReference>
<dbReference type="RefSeq" id="XP_015133201.1">
    <property type="nucleotide sequence ID" value="XM_015277715.1"/>
</dbReference>
<dbReference type="SMR" id="Q5F407"/>
<dbReference type="FunCoup" id="Q5F407">
    <property type="interactions" value="1489"/>
</dbReference>
<dbReference type="STRING" id="9031.ENSGALP00000045090"/>
<dbReference type="CAZy" id="GT54">
    <property type="family name" value="Glycosyltransferase Family 54"/>
</dbReference>
<dbReference type="GlyCosmos" id="Q5F407">
    <property type="glycosylation" value="3 sites, No reported glycans"/>
</dbReference>
<dbReference type="GlyGen" id="Q5F407">
    <property type="glycosylation" value="4 sites"/>
</dbReference>
<dbReference type="PaxDb" id="9031-ENSGALP00000027001"/>
<dbReference type="GeneID" id="418692"/>
<dbReference type="KEGG" id="gga:418692"/>
<dbReference type="CTD" id="11320"/>
<dbReference type="VEuPathDB" id="HostDB:geneid_418692"/>
<dbReference type="eggNOG" id="ENOG502QPQJ">
    <property type="taxonomic scope" value="Eukaryota"/>
</dbReference>
<dbReference type="HOGENOM" id="CLU_027046_3_0_1"/>
<dbReference type="InParanoid" id="Q5F407"/>
<dbReference type="OrthoDB" id="2016523at2759"/>
<dbReference type="PhylomeDB" id="Q5F407"/>
<dbReference type="TreeFam" id="TF324570"/>
<dbReference type="Reactome" id="R-GGA-381426">
    <property type="pathway name" value="Regulation of Insulin-like Growth Factor (IGF) transport and uptake by Insulin-like Growth Factor Binding Proteins (IGFBPs)"/>
</dbReference>
<dbReference type="Reactome" id="R-GGA-8957275">
    <property type="pathway name" value="Post-translational protein phosphorylation"/>
</dbReference>
<dbReference type="Reactome" id="R-GGA-975577">
    <property type="pathway name" value="N-Glycan antennae elongation"/>
</dbReference>
<dbReference type="UniPathway" id="UPA00378"/>
<dbReference type="PRO" id="PR:Q5F407"/>
<dbReference type="Proteomes" id="UP000000539">
    <property type="component" value="Chromosome 1"/>
</dbReference>
<dbReference type="Bgee" id="ENSGALG00000030780">
    <property type="expression patterns" value="Expressed in spleen and 13 other cell types or tissues"/>
</dbReference>
<dbReference type="GO" id="GO:0005783">
    <property type="term" value="C:endoplasmic reticulum"/>
    <property type="evidence" value="ECO:0000318"/>
    <property type="project" value="GO_Central"/>
</dbReference>
<dbReference type="GO" id="GO:0005793">
    <property type="term" value="C:endoplasmic reticulum-Golgi intermediate compartment"/>
    <property type="evidence" value="ECO:0000318"/>
    <property type="project" value="GO_Central"/>
</dbReference>
<dbReference type="GO" id="GO:0005576">
    <property type="term" value="C:extracellular region"/>
    <property type="evidence" value="ECO:0007669"/>
    <property type="project" value="UniProtKB-SubCell"/>
</dbReference>
<dbReference type="GO" id="GO:0000139">
    <property type="term" value="C:Golgi membrane"/>
    <property type="evidence" value="ECO:0007669"/>
    <property type="project" value="UniProtKB-SubCell"/>
</dbReference>
<dbReference type="GO" id="GO:0005795">
    <property type="term" value="C:Golgi stack"/>
    <property type="evidence" value="ECO:0000318"/>
    <property type="project" value="GO_Central"/>
</dbReference>
<dbReference type="GO" id="GO:0005777">
    <property type="term" value="C:peroxisome"/>
    <property type="evidence" value="ECO:0000250"/>
    <property type="project" value="UniProtKB"/>
</dbReference>
<dbReference type="GO" id="GO:0008375">
    <property type="term" value="F:acetylglucosaminyltransferase activity"/>
    <property type="evidence" value="ECO:0000318"/>
    <property type="project" value="GO_Central"/>
</dbReference>
<dbReference type="GO" id="GO:0008453">
    <property type="term" value="F:alanine-glyoxylate transaminase activity"/>
    <property type="evidence" value="ECO:0000250"/>
    <property type="project" value="UniProtKB"/>
</dbReference>
<dbReference type="GO" id="GO:0008454">
    <property type="term" value="F:alpha-1,3-mannosylglycoprotein 4-beta-N-acetylglucosaminyltransferase activity"/>
    <property type="evidence" value="ECO:0000250"/>
    <property type="project" value="UniProtKB"/>
</dbReference>
<dbReference type="GO" id="GO:0046872">
    <property type="term" value="F:metal ion binding"/>
    <property type="evidence" value="ECO:0007669"/>
    <property type="project" value="UniProtKB-KW"/>
</dbReference>
<dbReference type="GO" id="GO:0042803">
    <property type="term" value="F:protein homodimerization activity"/>
    <property type="evidence" value="ECO:0000250"/>
    <property type="project" value="UniProtKB"/>
</dbReference>
<dbReference type="GO" id="GO:0046487">
    <property type="term" value="P:glyoxylate metabolic process"/>
    <property type="evidence" value="ECO:0000250"/>
    <property type="project" value="UniProtKB"/>
</dbReference>
<dbReference type="GO" id="GO:0006491">
    <property type="term" value="P:N-glycan processing"/>
    <property type="evidence" value="ECO:0000250"/>
    <property type="project" value="UniProtKB"/>
</dbReference>
<dbReference type="GO" id="GO:0006487">
    <property type="term" value="P:protein N-linked glycosylation"/>
    <property type="evidence" value="ECO:0000318"/>
    <property type="project" value="GO_Central"/>
</dbReference>
<dbReference type="InterPro" id="IPR006759">
    <property type="entry name" value="Glyco_transf_54"/>
</dbReference>
<dbReference type="InterPro" id="IPR056576">
    <property type="entry name" value="MGAT4_A/B/C_C"/>
</dbReference>
<dbReference type="PANTHER" id="PTHR12062:SF4">
    <property type="entry name" value="ALPHA-1,3-MANNOSYL-GLYCOPROTEIN 4-BETA-N-ACETYLGLUCOSAMINYLTRANSFERASE A"/>
    <property type="match status" value="1"/>
</dbReference>
<dbReference type="PANTHER" id="PTHR12062">
    <property type="entry name" value="N-ACETYLGLUCOSAMINYLTRANSFERASE VI"/>
    <property type="match status" value="1"/>
</dbReference>
<dbReference type="Pfam" id="PF04666">
    <property type="entry name" value="MGAT4_cons"/>
    <property type="match status" value="1"/>
</dbReference>
<dbReference type="Pfam" id="PF23524">
    <property type="entry name" value="MGAT4A_C"/>
    <property type="match status" value="1"/>
</dbReference>
<evidence type="ECO:0000250" key="1">
    <source>
        <dbReference type="UniProtKB" id="O77836"/>
    </source>
</evidence>
<evidence type="ECO:0000250" key="2">
    <source>
        <dbReference type="UniProtKB" id="Q812G0"/>
    </source>
</evidence>
<evidence type="ECO:0000250" key="3">
    <source>
        <dbReference type="UniProtKB" id="Q9D4R2"/>
    </source>
</evidence>
<evidence type="ECO:0000250" key="4">
    <source>
        <dbReference type="UniProtKB" id="Q9UM21"/>
    </source>
</evidence>
<evidence type="ECO:0000255" key="5"/>
<evidence type="ECO:0000305" key="6"/>
<organism>
    <name type="scientific">Gallus gallus</name>
    <name type="common">Chicken</name>
    <dbReference type="NCBI Taxonomy" id="9031"/>
    <lineage>
        <taxon>Eukaryota</taxon>
        <taxon>Metazoa</taxon>
        <taxon>Chordata</taxon>
        <taxon>Craniata</taxon>
        <taxon>Vertebrata</taxon>
        <taxon>Euteleostomi</taxon>
        <taxon>Archelosauria</taxon>
        <taxon>Archosauria</taxon>
        <taxon>Dinosauria</taxon>
        <taxon>Saurischia</taxon>
        <taxon>Theropoda</taxon>
        <taxon>Coelurosauria</taxon>
        <taxon>Aves</taxon>
        <taxon>Neognathae</taxon>
        <taxon>Galloanserae</taxon>
        <taxon>Galliformes</taxon>
        <taxon>Phasianidae</taxon>
        <taxon>Phasianinae</taxon>
        <taxon>Gallus</taxon>
    </lineage>
</organism>
<name>MGT4A_CHICK</name>
<keyword id="KW-0175">Coiled coil</keyword>
<keyword id="KW-0325">Glycoprotein</keyword>
<keyword id="KW-0328">Glycosyltransferase</keyword>
<keyword id="KW-0333">Golgi apparatus</keyword>
<keyword id="KW-0472">Membrane</keyword>
<keyword id="KW-0479">Metal-binding</keyword>
<keyword id="KW-1185">Reference proteome</keyword>
<keyword id="KW-0964">Secreted</keyword>
<keyword id="KW-0735">Signal-anchor</keyword>
<keyword id="KW-0808">Transferase</keyword>
<keyword id="KW-0812">Transmembrane</keyword>
<keyword id="KW-1133">Transmembrane helix</keyword>